<accession>A8Z683</accession>
<feature type="chain" id="PRO_0000323216" description="Small ribosomal subunit protein uS5">
    <location>
        <begin position="1"/>
        <end position="171"/>
    </location>
</feature>
<feature type="domain" description="S5 DRBM" evidence="1">
    <location>
        <begin position="14"/>
        <end position="77"/>
    </location>
</feature>
<name>RS5_KARMG</name>
<dbReference type="EMBL" id="CP000770">
    <property type="protein sequence ID" value="ABS30634.1"/>
    <property type="molecule type" value="Genomic_DNA"/>
</dbReference>
<dbReference type="SMR" id="A8Z683"/>
<dbReference type="STRING" id="444179.SMGWSS_237"/>
<dbReference type="KEGG" id="smg:SMGWSS_237"/>
<dbReference type="HOGENOM" id="CLU_065898_2_2_10"/>
<dbReference type="Proteomes" id="UP000000781">
    <property type="component" value="Chromosome"/>
</dbReference>
<dbReference type="GO" id="GO:0015935">
    <property type="term" value="C:small ribosomal subunit"/>
    <property type="evidence" value="ECO:0007669"/>
    <property type="project" value="InterPro"/>
</dbReference>
<dbReference type="GO" id="GO:0019843">
    <property type="term" value="F:rRNA binding"/>
    <property type="evidence" value="ECO:0007669"/>
    <property type="project" value="UniProtKB-UniRule"/>
</dbReference>
<dbReference type="GO" id="GO:0003735">
    <property type="term" value="F:structural constituent of ribosome"/>
    <property type="evidence" value="ECO:0007669"/>
    <property type="project" value="InterPro"/>
</dbReference>
<dbReference type="GO" id="GO:0006412">
    <property type="term" value="P:translation"/>
    <property type="evidence" value="ECO:0007669"/>
    <property type="project" value="UniProtKB-UniRule"/>
</dbReference>
<dbReference type="FunFam" id="3.30.230.10:FF:000002">
    <property type="entry name" value="30S ribosomal protein S5"/>
    <property type="match status" value="1"/>
</dbReference>
<dbReference type="Gene3D" id="3.30.160.20">
    <property type="match status" value="1"/>
</dbReference>
<dbReference type="Gene3D" id="3.30.230.10">
    <property type="match status" value="1"/>
</dbReference>
<dbReference type="HAMAP" id="MF_01307_B">
    <property type="entry name" value="Ribosomal_uS5_B"/>
    <property type="match status" value="1"/>
</dbReference>
<dbReference type="InterPro" id="IPR020568">
    <property type="entry name" value="Ribosomal_Su5_D2-typ_SF"/>
</dbReference>
<dbReference type="InterPro" id="IPR000851">
    <property type="entry name" value="Ribosomal_uS5"/>
</dbReference>
<dbReference type="InterPro" id="IPR005712">
    <property type="entry name" value="Ribosomal_uS5_bac-type"/>
</dbReference>
<dbReference type="InterPro" id="IPR005324">
    <property type="entry name" value="Ribosomal_uS5_C"/>
</dbReference>
<dbReference type="InterPro" id="IPR013810">
    <property type="entry name" value="Ribosomal_uS5_N"/>
</dbReference>
<dbReference type="InterPro" id="IPR014721">
    <property type="entry name" value="Ribsml_uS5_D2-typ_fold_subgr"/>
</dbReference>
<dbReference type="NCBIfam" id="TIGR01021">
    <property type="entry name" value="rpsE_bact"/>
    <property type="match status" value="1"/>
</dbReference>
<dbReference type="PANTHER" id="PTHR48432">
    <property type="entry name" value="S5 DRBM DOMAIN-CONTAINING PROTEIN"/>
    <property type="match status" value="1"/>
</dbReference>
<dbReference type="PANTHER" id="PTHR48432:SF1">
    <property type="entry name" value="S5 DRBM DOMAIN-CONTAINING PROTEIN"/>
    <property type="match status" value="1"/>
</dbReference>
<dbReference type="Pfam" id="PF00333">
    <property type="entry name" value="Ribosomal_S5"/>
    <property type="match status" value="1"/>
</dbReference>
<dbReference type="Pfam" id="PF03719">
    <property type="entry name" value="Ribosomal_S5_C"/>
    <property type="match status" value="1"/>
</dbReference>
<dbReference type="SUPFAM" id="SSF54768">
    <property type="entry name" value="dsRNA-binding domain-like"/>
    <property type="match status" value="1"/>
</dbReference>
<dbReference type="SUPFAM" id="SSF54211">
    <property type="entry name" value="Ribosomal protein S5 domain 2-like"/>
    <property type="match status" value="1"/>
</dbReference>
<dbReference type="PROSITE" id="PS50881">
    <property type="entry name" value="S5_DSRBD"/>
    <property type="match status" value="1"/>
</dbReference>
<protein>
    <recommendedName>
        <fullName evidence="1">Small ribosomal subunit protein uS5</fullName>
    </recommendedName>
    <alternativeName>
        <fullName evidence="2">30S ribosomal protein S5</fullName>
    </alternativeName>
</protein>
<reference key="1">
    <citation type="journal article" date="2007" name="Proc. Natl. Acad. Sci. U.S.A.">
        <title>Parallel genomic evolution and metabolic interdependence in an ancient symbiosis.</title>
        <authorList>
            <person name="McCutcheon J.P."/>
            <person name="Moran N.A."/>
        </authorList>
    </citation>
    <scope>NUCLEOTIDE SEQUENCE [LARGE SCALE GENOMIC DNA]</scope>
    <source>
        <strain>GWSS</strain>
    </source>
</reference>
<comment type="function">
    <text evidence="1">With S4 and S12 plays an important role in translational accuracy.</text>
</comment>
<comment type="function">
    <text evidence="1">Located at the back of the 30S subunit body where it stabilizes the conformation of the head with respect to the body.</text>
</comment>
<comment type="subunit">
    <text evidence="1">Part of the 30S ribosomal subunit. Contacts proteins S4 and S8.</text>
</comment>
<comment type="domain">
    <text>The N-terminal domain interacts with the head of the 30S subunit; the C-terminal domain interacts with the body and contacts protein S4. The interaction surface between S4 and S5 is involved in control of translational fidelity.</text>
</comment>
<comment type="similarity">
    <text evidence="1">Belongs to the universal ribosomal protein uS5 family.</text>
</comment>
<gene>
    <name evidence="1" type="primary">rpsE</name>
    <name type="ordered locus">SMGWSS_237</name>
</gene>
<evidence type="ECO:0000255" key="1">
    <source>
        <dbReference type="HAMAP-Rule" id="MF_01307"/>
    </source>
</evidence>
<evidence type="ECO:0000305" key="2"/>
<keyword id="KW-0687">Ribonucleoprotein</keyword>
<keyword id="KW-0689">Ribosomal protein</keyword>
<keyword id="KW-0694">RNA-binding</keyword>
<keyword id="KW-0699">rRNA-binding</keyword>
<organism>
    <name type="scientific">Karelsulcia muelleri (strain GWSS)</name>
    <name type="common">Sulcia muelleri</name>
    <dbReference type="NCBI Taxonomy" id="444179"/>
    <lineage>
        <taxon>Bacteria</taxon>
        <taxon>Pseudomonadati</taxon>
        <taxon>Bacteroidota</taxon>
        <taxon>Flavobacteriia</taxon>
        <taxon>Flavobacteriales</taxon>
        <taxon>Candidatus Karelsulcia</taxon>
    </lineage>
</organism>
<proteinExistence type="inferred from homology"/>
<sequence length="171" mass="18379">MTVLKKNEKIKLELKEKLVMVNRVCKVTKGRRYFSFTALVIKGDENGVVGYGFGKAKEAQDAIYKAGEKAKKKLLKINIIKGGTIPHEQEAKYCGARVFICPASEGTGIIAGGAVRSVLEAVGLTNVLSKSKGSSNKINCIKATILALSKLRTVNTIALERGISISKILIG</sequence>